<feature type="chain" id="PRO_0000454375" description="Germ cell nuclear acidic protein">
    <location>
        <begin position="1"/>
        <end position="1030"/>
    </location>
</feature>
<feature type="region of interest" description="Disordered" evidence="1">
    <location>
        <begin position="1"/>
        <end position="59"/>
    </location>
</feature>
<feature type="region of interest" description="Disordered" evidence="1">
    <location>
        <begin position="196"/>
        <end position="245"/>
    </location>
</feature>
<feature type="region of interest" description="Disordered" evidence="1">
    <location>
        <begin position="266"/>
        <end position="361"/>
    </location>
</feature>
<feature type="region of interest" description="Disordered" evidence="1">
    <location>
        <begin position="375"/>
        <end position="433"/>
    </location>
</feature>
<feature type="region of interest" description="Disordered" evidence="1">
    <location>
        <begin position="457"/>
        <end position="594"/>
    </location>
</feature>
<feature type="region of interest" description="Disordered" evidence="1">
    <location>
        <begin position="699"/>
        <end position="764"/>
    </location>
</feature>
<feature type="compositionally biased region" description="Basic and acidic residues" evidence="1">
    <location>
        <begin position="20"/>
        <end position="33"/>
    </location>
</feature>
<feature type="compositionally biased region" description="Polar residues" evidence="1">
    <location>
        <begin position="298"/>
        <end position="316"/>
    </location>
</feature>
<feature type="compositionally biased region" description="Polar residues" evidence="1">
    <location>
        <begin position="329"/>
        <end position="349"/>
    </location>
</feature>
<feature type="compositionally biased region" description="Polar residues" evidence="1">
    <location>
        <begin position="505"/>
        <end position="516"/>
    </location>
</feature>
<feature type="compositionally biased region" description="Basic and acidic residues" evidence="1">
    <location>
        <begin position="541"/>
        <end position="553"/>
    </location>
</feature>
<feature type="compositionally biased region" description="Basic and acidic residues" evidence="1">
    <location>
        <begin position="578"/>
        <end position="594"/>
    </location>
</feature>
<feature type="compositionally biased region" description="Low complexity" evidence="1">
    <location>
        <begin position="720"/>
        <end position="748"/>
    </location>
</feature>
<evidence type="ECO:0000256" key="1">
    <source>
        <dbReference type="SAM" id="MobiDB-lite"/>
    </source>
</evidence>
<evidence type="ECO:0000269" key="2">
    <source>
    </source>
</evidence>
<evidence type="ECO:0000303" key="3">
    <source>
    </source>
</evidence>
<evidence type="ECO:0000305" key="4"/>
<evidence type="ECO:0000312" key="5">
    <source>
        <dbReference type="FlyBase" id="FBgn0023515"/>
    </source>
</evidence>
<protein>
    <recommendedName>
        <fullName evidence="4">Germ cell nuclear acidic protein</fullName>
    </recommendedName>
    <alternativeName>
        <fullName evidence="3">Germ cell nuclear acidic peptidase</fullName>
    </alternativeName>
</protein>
<comment type="function">
    <text evidence="2">May play a role in DNA-protein cross-links (DPCs) clearance, ensuring the genomic stability by protecting germ cells and early embryos from various sources of damage (PubMed:31839537). Limits replication stress and DNA double-strand breaks (PubMed:31839537).</text>
</comment>
<comment type="subcellular location">
    <subcellularLocation>
        <location evidence="2">Cytoplasm</location>
    </subcellularLocation>
    <subcellularLocation>
        <location evidence="2">Chromosome</location>
    </subcellularLocation>
    <text evidence="2">During mitosis, associated with dividing chromosomes.</text>
</comment>
<comment type="disruption phenotype">
    <text evidence="2">Homozygous mutant females initially laid eggs but stopped after approximately one week. Many of the embryos derived from these eggs exhibited maternal-effect lethality (PubMed:31839537). The few adults from F1 progeny of homozygous mutant females appear sickly and sub-fertile. Of these, 4% display bilateral gynandromorphism a rare phenotype caused by X chromosome loss during the early embryogenesis. By contrast, embryos from homozygous mutant females displayed X chromosome bridges and second chromosome missegregation and polyploidy (PubMed:31839537).</text>
</comment>
<comment type="similarity">
    <text evidence="4">Belongs to the serine-aspartate repeat-containing protein (SDr) family.</text>
</comment>
<dbReference type="EMBL" id="AE014298">
    <property type="protein sequence ID" value="AAN09061.2"/>
    <property type="molecule type" value="Genomic_DNA"/>
</dbReference>
<dbReference type="EMBL" id="AE014298">
    <property type="protein sequence ID" value="AHN59264.1"/>
    <property type="molecule type" value="Genomic_DNA"/>
</dbReference>
<dbReference type="RefSeq" id="NP_001284793.1">
    <property type="nucleotide sequence ID" value="NM_001297864.1"/>
</dbReference>
<dbReference type="RefSeq" id="NP_726770.2">
    <property type="nucleotide sequence ID" value="NM_166909.3"/>
</dbReference>
<dbReference type="SMR" id="Q7KW09"/>
<dbReference type="FunCoup" id="Q7KW09">
    <property type="interactions" value="66"/>
</dbReference>
<dbReference type="IntAct" id="Q7KW09">
    <property type="interactions" value="1"/>
</dbReference>
<dbReference type="EnsemblMetazoa" id="FBtr0070370">
    <property type="protein sequence ID" value="FBpp0070354"/>
    <property type="gene ID" value="FBgn0023515"/>
</dbReference>
<dbReference type="EnsemblMetazoa" id="FBtr0339494">
    <property type="protein sequence ID" value="FBpp0308578"/>
    <property type="gene ID" value="FBgn0023515"/>
</dbReference>
<dbReference type="GeneID" id="31139"/>
<dbReference type="KEGG" id="dme:Dmel_CG14814"/>
<dbReference type="UCSC" id="CG14814-RA">
    <property type="organism name" value="d. melanogaster"/>
</dbReference>
<dbReference type="AGR" id="FB:FBgn0023515"/>
<dbReference type="CTD" id="93953"/>
<dbReference type="FlyBase" id="FBgn0023515">
    <property type="gene designation" value="Gcna"/>
</dbReference>
<dbReference type="VEuPathDB" id="VectorBase:FBgn0023515"/>
<dbReference type="GeneTree" id="ENSGT00440000040163"/>
<dbReference type="InParanoid" id="Q7KW09"/>
<dbReference type="OrthoDB" id="20772at2759"/>
<dbReference type="BioGRID-ORCS" id="31139">
    <property type="hits" value="0 hits in 1 CRISPR screen"/>
</dbReference>
<dbReference type="GenomeRNAi" id="31139"/>
<dbReference type="PRO" id="PR:Q7KW09"/>
<dbReference type="Proteomes" id="UP000000803">
    <property type="component" value="Chromosome X"/>
</dbReference>
<dbReference type="Bgee" id="FBgn0023515">
    <property type="expression patterns" value="Expressed in egg chamber and 49 other cell types or tissues"/>
</dbReference>
<dbReference type="ExpressionAtlas" id="Q7KW09">
    <property type="expression patterns" value="baseline and differential"/>
</dbReference>
<dbReference type="GO" id="GO:0005694">
    <property type="term" value="C:chromosome"/>
    <property type="evidence" value="ECO:0000314"/>
    <property type="project" value="UniProtKB"/>
</dbReference>
<dbReference type="GO" id="GO:0005737">
    <property type="term" value="C:cytoplasm"/>
    <property type="evidence" value="ECO:0000314"/>
    <property type="project" value="UniProtKB"/>
</dbReference>
<dbReference type="GO" id="GO:0005634">
    <property type="term" value="C:nucleus"/>
    <property type="evidence" value="ECO:0000318"/>
    <property type="project" value="GO_Central"/>
</dbReference>
<dbReference type="GO" id="GO:0044547">
    <property type="term" value="F:DNA topoisomerase binding"/>
    <property type="evidence" value="ECO:0000314"/>
    <property type="project" value="UniProtKB"/>
</dbReference>
<dbReference type="GO" id="GO:1904931">
    <property type="term" value="F:MCM complex binding"/>
    <property type="evidence" value="ECO:0000314"/>
    <property type="project" value="UniProtKB"/>
</dbReference>
<dbReference type="GO" id="GO:0106300">
    <property type="term" value="P:protein-DNA covalent cross-linking repair"/>
    <property type="evidence" value="ECO:0000315"/>
    <property type="project" value="UniProtKB"/>
</dbReference>
<dbReference type="InterPro" id="IPR006640">
    <property type="entry name" value="SprT-like_domain"/>
</dbReference>
<dbReference type="InterPro" id="IPR035240">
    <property type="entry name" value="SprT_Zn_ribbon"/>
</dbReference>
<dbReference type="PANTHER" id="PTHR23099:SF0">
    <property type="entry name" value="GERM CELL NUCLEAR ACIDIC PROTEIN"/>
    <property type="match status" value="1"/>
</dbReference>
<dbReference type="PANTHER" id="PTHR23099">
    <property type="entry name" value="TRANSCRIPTIONAL REGULATOR"/>
    <property type="match status" value="1"/>
</dbReference>
<dbReference type="Pfam" id="PF10263">
    <property type="entry name" value="SprT-like"/>
    <property type="match status" value="1"/>
</dbReference>
<dbReference type="Pfam" id="PF17283">
    <property type="entry name" value="Zn_ribbon_SprT"/>
    <property type="match status" value="1"/>
</dbReference>
<dbReference type="SMART" id="SM00731">
    <property type="entry name" value="SprT"/>
    <property type="match status" value="1"/>
</dbReference>
<name>GCNA_DROME</name>
<sequence>MADHKYRLFNAVDPSKVSHAPKDHPEKRNDQKTRKLPAAPMRANVGAPAPSCGANTEDTELDNSDYMEALQLSADGCSQDVANVGDVELLSAGISNLKVQPINEEHSAKPEISICISSTTEENVSGDDDAASCITISDSSEDEQEPLPPDSMAVSEREIVANPGQEDIPQPMLTTEKVQRIEAFLRDVSIERREMEWNGPLTPPPLSSSQRQSRLADADTESMSPTDEDWQPPTTRPIYNSTQLANNDTQVNTICSADATRLDSSKRLADDETEANTLGSEELEPTYSSKRLADNDTEPNTLCSDSSETHNSTIHNNEPVPDESIEIPETSSEGELTPQKASSGSSTSGGDEHGSIQVSSINISAKINIKISIPTMESSSAEDDDEHYSSPRATKSLPSSEEVQHQEHQQQDPQSHQKSMLSVDDASEDEQFLTHAEKLLNQLYGKSWQTPDVIRTLKRSSGSGGKQAPLRPRNIQATAVTTAKKKKPKPDESVLGDFSIFTKPLRTNQTPLNSTRLPPMRAVQTERRPRTQKPLTRPRTNHIDEDRWRKLIDSDSGTDASDDEDADATFSESGSDSDSDKDKENKQKRGDLTYLDLSKDEVEVISNPDQDSPSPKCHRRLDDILRSCRASVKAKLPATPVQQPNIRRQLFTPNAGFENDNQAKEIVNRALDLDMLDELESDYLPGTPVHRRVQEVKKKLGIGQQGQTTPHESPILKLLTPKTAPPKGTAPPKTSAPPKVSTPPKSTKQIPKPRKQKDLSPVASGGKCGFLKSLEGQVSRDRADNEAFFYRENFARNKDQLAQHLYKMYNAQVFNNELDVPITWSKLLRNTAGRCMNKRKLNQRSSVVELSVKVLTTADRLRCTLIHELCHAAAWVFNGEGGHGRVWKMWAQRANDKFPDLPQIKVCHNYSIEFKYTYKCLSCDKASHAHSRSRKVEDLRCRICRGPITLFLNKKDKQGNTVSTPAGEAKGFAKFVKDNFQRHKRDNMTAAQVMRILSVEYAKQKGQPAEETAASIASRVETLTLDESSN</sequence>
<organism>
    <name type="scientific">Drosophila melanogaster</name>
    <name type="common">Fruit fly</name>
    <dbReference type="NCBI Taxonomy" id="7227"/>
    <lineage>
        <taxon>Eukaryota</taxon>
        <taxon>Metazoa</taxon>
        <taxon>Ecdysozoa</taxon>
        <taxon>Arthropoda</taxon>
        <taxon>Hexapoda</taxon>
        <taxon>Insecta</taxon>
        <taxon>Pterygota</taxon>
        <taxon>Neoptera</taxon>
        <taxon>Endopterygota</taxon>
        <taxon>Diptera</taxon>
        <taxon>Brachycera</taxon>
        <taxon>Muscomorpha</taxon>
        <taxon>Ephydroidea</taxon>
        <taxon>Drosophilidae</taxon>
        <taxon>Drosophila</taxon>
        <taxon>Sophophora</taxon>
    </lineage>
</organism>
<proteinExistence type="inferred from homology"/>
<reference key="1">
    <citation type="journal article" date="2000" name="Science">
        <title>The genome sequence of Drosophila melanogaster.</title>
        <authorList>
            <person name="Adams M.D."/>
            <person name="Celniker S.E."/>
            <person name="Holt R.A."/>
            <person name="Evans C.A."/>
            <person name="Gocayne J.D."/>
            <person name="Amanatides P.G."/>
            <person name="Scherer S.E."/>
            <person name="Li P.W."/>
            <person name="Hoskins R.A."/>
            <person name="Galle R.F."/>
            <person name="George R.A."/>
            <person name="Lewis S.E."/>
            <person name="Richards S."/>
            <person name="Ashburner M."/>
            <person name="Henderson S.N."/>
            <person name="Sutton G.G."/>
            <person name="Wortman J.R."/>
            <person name="Yandell M.D."/>
            <person name="Zhang Q."/>
            <person name="Chen L.X."/>
            <person name="Brandon R.C."/>
            <person name="Rogers Y.-H.C."/>
            <person name="Blazej R.G."/>
            <person name="Champe M."/>
            <person name="Pfeiffer B.D."/>
            <person name="Wan K.H."/>
            <person name="Doyle C."/>
            <person name="Baxter E.G."/>
            <person name="Helt G."/>
            <person name="Nelson C.R."/>
            <person name="Miklos G.L.G."/>
            <person name="Abril J.F."/>
            <person name="Agbayani A."/>
            <person name="An H.-J."/>
            <person name="Andrews-Pfannkoch C."/>
            <person name="Baldwin D."/>
            <person name="Ballew R.M."/>
            <person name="Basu A."/>
            <person name="Baxendale J."/>
            <person name="Bayraktaroglu L."/>
            <person name="Beasley E.M."/>
            <person name="Beeson K.Y."/>
            <person name="Benos P.V."/>
            <person name="Berman B.P."/>
            <person name="Bhandari D."/>
            <person name="Bolshakov S."/>
            <person name="Borkova D."/>
            <person name="Botchan M.R."/>
            <person name="Bouck J."/>
            <person name="Brokstein P."/>
            <person name="Brottier P."/>
            <person name="Burtis K.C."/>
            <person name="Busam D.A."/>
            <person name="Butler H."/>
            <person name="Cadieu E."/>
            <person name="Center A."/>
            <person name="Chandra I."/>
            <person name="Cherry J.M."/>
            <person name="Cawley S."/>
            <person name="Dahlke C."/>
            <person name="Davenport L.B."/>
            <person name="Davies P."/>
            <person name="de Pablos B."/>
            <person name="Delcher A."/>
            <person name="Deng Z."/>
            <person name="Mays A.D."/>
            <person name="Dew I."/>
            <person name="Dietz S.M."/>
            <person name="Dodson K."/>
            <person name="Doup L.E."/>
            <person name="Downes M."/>
            <person name="Dugan-Rocha S."/>
            <person name="Dunkov B.C."/>
            <person name="Dunn P."/>
            <person name="Durbin K.J."/>
            <person name="Evangelista C.C."/>
            <person name="Ferraz C."/>
            <person name="Ferriera S."/>
            <person name="Fleischmann W."/>
            <person name="Fosler C."/>
            <person name="Gabrielian A.E."/>
            <person name="Garg N.S."/>
            <person name="Gelbart W.M."/>
            <person name="Glasser K."/>
            <person name="Glodek A."/>
            <person name="Gong F."/>
            <person name="Gorrell J.H."/>
            <person name="Gu Z."/>
            <person name="Guan P."/>
            <person name="Harris M."/>
            <person name="Harris N.L."/>
            <person name="Harvey D.A."/>
            <person name="Heiman T.J."/>
            <person name="Hernandez J.R."/>
            <person name="Houck J."/>
            <person name="Hostin D."/>
            <person name="Houston K.A."/>
            <person name="Howland T.J."/>
            <person name="Wei M.-H."/>
            <person name="Ibegwam C."/>
            <person name="Jalali M."/>
            <person name="Kalush F."/>
            <person name="Karpen G.H."/>
            <person name="Ke Z."/>
            <person name="Kennison J.A."/>
            <person name="Ketchum K.A."/>
            <person name="Kimmel B.E."/>
            <person name="Kodira C.D."/>
            <person name="Kraft C.L."/>
            <person name="Kravitz S."/>
            <person name="Kulp D."/>
            <person name="Lai Z."/>
            <person name="Lasko P."/>
            <person name="Lei Y."/>
            <person name="Levitsky A.A."/>
            <person name="Li J.H."/>
            <person name="Li Z."/>
            <person name="Liang Y."/>
            <person name="Lin X."/>
            <person name="Liu X."/>
            <person name="Mattei B."/>
            <person name="McIntosh T.C."/>
            <person name="McLeod M.P."/>
            <person name="McPherson D."/>
            <person name="Merkulov G."/>
            <person name="Milshina N.V."/>
            <person name="Mobarry C."/>
            <person name="Morris J."/>
            <person name="Moshrefi A."/>
            <person name="Mount S.M."/>
            <person name="Moy M."/>
            <person name="Murphy B."/>
            <person name="Murphy L."/>
            <person name="Muzny D.M."/>
            <person name="Nelson D.L."/>
            <person name="Nelson D.R."/>
            <person name="Nelson K.A."/>
            <person name="Nixon K."/>
            <person name="Nusskern D.R."/>
            <person name="Pacleb J.M."/>
            <person name="Palazzolo M."/>
            <person name="Pittman G.S."/>
            <person name="Pan S."/>
            <person name="Pollard J."/>
            <person name="Puri V."/>
            <person name="Reese M.G."/>
            <person name="Reinert K."/>
            <person name="Remington K."/>
            <person name="Saunders R.D.C."/>
            <person name="Scheeler F."/>
            <person name="Shen H."/>
            <person name="Shue B.C."/>
            <person name="Siden-Kiamos I."/>
            <person name="Simpson M."/>
            <person name="Skupski M.P."/>
            <person name="Smith T.J."/>
            <person name="Spier E."/>
            <person name="Spradling A.C."/>
            <person name="Stapleton M."/>
            <person name="Strong R."/>
            <person name="Sun E."/>
            <person name="Svirskas R."/>
            <person name="Tector C."/>
            <person name="Turner R."/>
            <person name="Venter E."/>
            <person name="Wang A.H."/>
            <person name="Wang X."/>
            <person name="Wang Z.-Y."/>
            <person name="Wassarman D.A."/>
            <person name="Weinstock G.M."/>
            <person name="Weissenbach J."/>
            <person name="Williams S.M."/>
            <person name="Woodage T."/>
            <person name="Worley K.C."/>
            <person name="Wu D."/>
            <person name="Yang S."/>
            <person name="Yao Q.A."/>
            <person name="Ye J."/>
            <person name="Yeh R.-F."/>
            <person name="Zaveri J.S."/>
            <person name="Zhan M."/>
            <person name="Zhang G."/>
            <person name="Zhao Q."/>
            <person name="Zheng L."/>
            <person name="Zheng X.H."/>
            <person name="Zhong F.N."/>
            <person name="Zhong W."/>
            <person name="Zhou X."/>
            <person name="Zhu S.C."/>
            <person name="Zhu X."/>
            <person name="Smith H.O."/>
            <person name="Gibbs R.A."/>
            <person name="Myers E.W."/>
            <person name="Rubin G.M."/>
            <person name="Venter J.C."/>
        </authorList>
    </citation>
    <scope>NUCLEOTIDE SEQUENCE [LARGE SCALE GENOMIC DNA]</scope>
    <source>
        <strain>Berkeley</strain>
    </source>
</reference>
<reference key="2">
    <citation type="journal article" date="2002" name="Genome Biol.">
        <title>Annotation of the Drosophila melanogaster euchromatic genome: a systematic review.</title>
        <authorList>
            <person name="Misra S."/>
            <person name="Crosby M.A."/>
            <person name="Mungall C.J."/>
            <person name="Matthews B.B."/>
            <person name="Campbell K.S."/>
            <person name="Hradecky P."/>
            <person name="Huang Y."/>
            <person name="Kaminker J.S."/>
            <person name="Millburn G.H."/>
            <person name="Prochnik S.E."/>
            <person name="Smith C.D."/>
            <person name="Tupy J.L."/>
            <person name="Whitfield E.J."/>
            <person name="Bayraktaroglu L."/>
            <person name="Berman B.P."/>
            <person name="Bettencourt B.R."/>
            <person name="Celniker S.E."/>
            <person name="de Grey A.D.N.J."/>
            <person name="Drysdale R.A."/>
            <person name="Harris N.L."/>
            <person name="Richter J."/>
            <person name="Russo S."/>
            <person name="Schroeder A.J."/>
            <person name="Shu S.Q."/>
            <person name="Stapleton M."/>
            <person name="Yamada C."/>
            <person name="Ashburner M."/>
            <person name="Gelbart W.M."/>
            <person name="Rubin G.M."/>
            <person name="Lewis S.E."/>
        </authorList>
    </citation>
    <scope>GENOME REANNOTATION</scope>
    <source>
        <strain>Berkeley</strain>
    </source>
</reference>
<reference key="3">
    <citation type="journal article" date="2020" name="Dev. Cell">
        <title>GCNA Preserves Genome Integrity and Fertility Across Species.</title>
        <authorList>
            <person name="Bhargava V."/>
            <person name="Goldstein C.D."/>
            <person name="Russell L."/>
            <person name="Xu L."/>
            <person name="Ahmed M."/>
            <person name="Li W."/>
            <person name="Casey A."/>
            <person name="Servage K."/>
            <person name="Kollipara R."/>
            <person name="Picciarelli Z."/>
            <person name="Kittler R."/>
            <person name="Yatsenko A."/>
            <person name="Carmell M."/>
            <person name="Orth K."/>
            <person name="Amatruda J.F."/>
            <person name="Yanowitz J.L."/>
            <person name="Buszczak M."/>
        </authorList>
    </citation>
    <scope>DISRUPTION PHENOTYPE</scope>
    <scope>FUNCTION</scope>
    <scope>SUBCELLULAR LOCATION</scope>
</reference>
<keyword id="KW-0158">Chromosome</keyword>
<keyword id="KW-0963">Cytoplasm</keyword>
<keyword id="KW-1185">Reference proteome</keyword>
<gene>
    <name evidence="5" type="primary">Gcna</name>
    <name evidence="5" type="ORF">CG14814</name>
</gene>
<accession>Q7KW09</accession>